<proteinExistence type="inferred from homology"/>
<dbReference type="EC" id="2.7.1.30" evidence="1"/>
<dbReference type="EMBL" id="CP000395">
    <property type="protein sequence ID" value="ABH01508.1"/>
    <property type="molecule type" value="Genomic_DNA"/>
</dbReference>
<dbReference type="EMBL" id="CP002933">
    <property type="protein sequence ID" value="AEL69469.1"/>
    <property type="molecule type" value="Genomic_DNA"/>
</dbReference>
<dbReference type="RefSeq" id="WP_004790383.1">
    <property type="nucleotide sequence ID" value="NZ_CP160066.1"/>
</dbReference>
<dbReference type="SMR" id="Q0SNS0"/>
<dbReference type="STRING" id="29518.BLA32_03095"/>
<dbReference type="GeneID" id="76831777"/>
<dbReference type="KEGG" id="baf:BAPKO_0250"/>
<dbReference type="KEGG" id="bafz:BafPKo_0242"/>
<dbReference type="PATRIC" id="fig|390236.22.peg.236"/>
<dbReference type="eggNOG" id="COG0554">
    <property type="taxonomic scope" value="Bacteria"/>
</dbReference>
<dbReference type="HOGENOM" id="CLU_009281_2_3_12"/>
<dbReference type="OrthoDB" id="9805576at2"/>
<dbReference type="UniPathway" id="UPA00618">
    <property type="reaction ID" value="UER00672"/>
</dbReference>
<dbReference type="Proteomes" id="UP000005216">
    <property type="component" value="Chromosome"/>
</dbReference>
<dbReference type="GO" id="GO:0005829">
    <property type="term" value="C:cytosol"/>
    <property type="evidence" value="ECO:0007669"/>
    <property type="project" value="TreeGrafter"/>
</dbReference>
<dbReference type="GO" id="GO:0005524">
    <property type="term" value="F:ATP binding"/>
    <property type="evidence" value="ECO:0007669"/>
    <property type="project" value="UniProtKB-UniRule"/>
</dbReference>
<dbReference type="GO" id="GO:0004370">
    <property type="term" value="F:glycerol kinase activity"/>
    <property type="evidence" value="ECO:0000250"/>
    <property type="project" value="UniProtKB"/>
</dbReference>
<dbReference type="GO" id="GO:0019563">
    <property type="term" value="P:glycerol catabolic process"/>
    <property type="evidence" value="ECO:0007669"/>
    <property type="project" value="UniProtKB-UniRule"/>
</dbReference>
<dbReference type="GO" id="GO:0006071">
    <property type="term" value="P:glycerol metabolic process"/>
    <property type="evidence" value="ECO:0000250"/>
    <property type="project" value="UniProtKB"/>
</dbReference>
<dbReference type="GO" id="GO:0006072">
    <property type="term" value="P:glycerol-3-phosphate metabolic process"/>
    <property type="evidence" value="ECO:0007669"/>
    <property type="project" value="InterPro"/>
</dbReference>
<dbReference type="CDD" id="cd07786">
    <property type="entry name" value="FGGY_EcGK_like"/>
    <property type="match status" value="1"/>
</dbReference>
<dbReference type="FunFam" id="3.30.420.40:FF:000007">
    <property type="entry name" value="Glycerol kinase"/>
    <property type="match status" value="1"/>
</dbReference>
<dbReference type="FunFam" id="3.30.420.40:FF:000008">
    <property type="entry name" value="Glycerol kinase"/>
    <property type="match status" value="1"/>
</dbReference>
<dbReference type="Gene3D" id="3.30.420.40">
    <property type="match status" value="2"/>
</dbReference>
<dbReference type="HAMAP" id="MF_00186">
    <property type="entry name" value="Glycerol_kin"/>
    <property type="match status" value="1"/>
</dbReference>
<dbReference type="InterPro" id="IPR043129">
    <property type="entry name" value="ATPase_NBD"/>
</dbReference>
<dbReference type="InterPro" id="IPR000577">
    <property type="entry name" value="Carb_kinase_FGGY"/>
</dbReference>
<dbReference type="InterPro" id="IPR018483">
    <property type="entry name" value="Carb_kinase_FGGY_CS"/>
</dbReference>
<dbReference type="InterPro" id="IPR018485">
    <property type="entry name" value="FGGY_C"/>
</dbReference>
<dbReference type="InterPro" id="IPR018484">
    <property type="entry name" value="FGGY_N"/>
</dbReference>
<dbReference type="InterPro" id="IPR005999">
    <property type="entry name" value="Glycerol_kin"/>
</dbReference>
<dbReference type="NCBIfam" id="TIGR01311">
    <property type="entry name" value="glycerol_kin"/>
    <property type="match status" value="1"/>
</dbReference>
<dbReference type="NCBIfam" id="NF000756">
    <property type="entry name" value="PRK00047.1"/>
    <property type="match status" value="1"/>
</dbReference>
<dbReference type="PANTHER" id="PTHR10196:SF69">
    <property type="entry name" value="GLYCEROL KINASE"/>
    <property type="match status" value="1"/>
</dbReference>
<dbReference type="PANTHER" id="PTHR10196">
    <property type="entry name" value="SUGAR KINASE"/>
    <property type="match status" value="1"/>
</dbReference>
<dbReference type="Pfam" id="PF02782">
    <property type="entry name" value="FGGY_C"/>
    <property type="match status" value="1"/>
</dbReference>
<dbReference type="Pfam" id="PF00370">
    <property type="entry name" value="FGGY_N"/>
    <property type="match status" value="1"/>
</dbReference>
<dbReference type="PIRSF" id="PIRSF000538">
    <property type="entry name" value="GlpK"/>
    <property type="match status" value="1"/>
</dbReference>
<dbReference type="SUPFAM" id="SSF53067">
    <property type="entry name" value="Actin-like ATPase domain"/>
    <property type="match status" value="2"/>
</dbReference>
<dbReference type="PROSITE" id="PS00933">
    <property type="entry name" value="FGGY_KINASES_1"/>
    <property type="match status" value="1"/>
</dbReference>
<dbReference type="PROSITE" id="PS00445">
    <property type="entry name" value="FGGY_KINASES_2"/>
    <property type="match status" value="1"/>
</dbReference>
<sequence>MKYILSIDQGTTSSRAIVFDKNANIKGIAQKEFTQIYPQPSWVEHDPTEIWGSQLGVITEALANSRILPNEVDAIGITNQRETTVIWEKNTGKPIYNAIVWQDRRTAKICDQLTKEGKDKIILEKTGLVLDSYFSGTKILWILDNVEGARQKAENGELCFGTIDTWLLWNLTQKKVHATDYSNASRTLLLNIKTLEWDDELLNILNIPKAILPELKESSTIYGKTDKSLFGAEIPIAGIAGDQFAATFGQACLKKGMAKNTYGTGCFLTVNIGKEPIINHERLLTSIAWGRKKSVTYVLEGSVFIGGAVIQWLRDGLEFFRKSSDAESLASSASDNGGVYFVPAFVGLGAPHWDSYARGTIIGITRGSTKAHITRAALESIAFQSFDILNTMKKSIPNFEIKELRVDGGASQNNLLMQFQADLLECKVVRPKITETTALGAAYLAGLASGYWQSAEEIVSLWQVDKIFEPSMPKNQKEKLLENWNRAIERSKSWIQNSHSL</sequence>
<keyword id="KW-0067">ATP-binding</keyword>
<keyword id="KW-0319">Glycerol metabolism</keyword>
<keyword id="KW-0418">Kinase</keyword>
<keyword id="KW-0547">Nucleotide-binding</keyword>
<keyword id="KW-0808">Transferase</keyword>
<evidence type="ECO:0000255" key="1">
    <source>
        <dbReference type="HAMAP-Rule" id="MF_00186"/>
    </source>
</evidence>
<reference key="1">
    <citation type="journal article" date="2006" name="BMC Genomics">
        <title>Comparative genome analysis: selection pressure on the Borrelia vls cassettes is essential for infectivity.</title>
        <authorList>
            <person name="Gloeckner G."/>
            <person name="Schulte-Spechtel U."/>
            <person name="Schilhabel M."/>
            <person name="Felder M."/>
            <person name="Suehnel J."/>
            <person name="Wilske B."/>
            <person name="Platzer M."/>
        </authorList>
    </citation>
    <scope>NUCLEOTIDE SEQUENCE [LARGE SCALE GENOMIC DNA]</scope>
    <source>
        <strain>PKo</strain>
    </source>
</reference>
<reference key="2">
    <citation type="journal article" date="2011" name="J. Bacteriol.">
        <title>Whole-genome sequences of two Borrelia afzelii and two Borrelia garinii Lyme disease agent isolates.</title>
        <authorList>
            <person name="Casjens S.R."/>
            <person name="Mongodin E.F."/>
            <person name="Qiu W.G."/>
            <person name="Dunn J.J."/>
            <person name="Luft B.J."/>
            <person name="Fraser-Liggett C.M."/>
            <person name="Schutzer S.E."/>
        </authorList>
    </citation>
    <scope>NUCLEOTIDE SEQUENCE [LARGE SCALE GENOMIC DNA]</scope>
    <source>
        <strain>PKo</strain>
    </source>
</reference>
<protein>
    <recommendedName>
        <fullName evidence="1">Glycerol kinase</fullName>
        <ecNumber evidence="1">2.7.1.30</ecNumber>
    </recommendedName>
    <alternativeName>
        <fullName evidence="1">ATP:glycerol 3-phosphotransferase</fullName>
    </alternativeName>
    <alternativeName>
        <fullName evidence="1">Glycerokinase</fullName>
        <shortName evidence="1">GK</shortName>
    </alternativeName>
</protein>
<accession>Q0SNS0</accession>
<accession>G0IR83</accession>
<organism>
    <name type="scientific">Borreliella afzelii (strain PKo)</name>
    <name type="common">Borrelia afzelii</name>
    <dbReference type="NCBI Taxonomy" id="390236"/>
    <lineage>
        <taxon>Bacteria</taxon>
        <taxon>Pseudomonadati</taxon>
        <taxon>Spirochaetota</taxon>
        <taxon>Spirochaetia</taxon>
        <taxon>Spirochaetales</taxon>
        <taxon>Borreliaceae</taxon>
        <taxon>Borreliella</taxon>
    </lineage>
</organism>
<comment type="function">
    <text evidence="1">Key enzyme in the regulation of glycerol uptake and metabolism. Catalyzes the phosphorylation of glycerol to yield sn-glycerol 3-phosphate.</text>
</comment>
<comment type="catalytic activity">
    <reaction evidence="1">
        <text>glycerol + ATP = sn-glycerol 3-phosphate + ADP + H(+)</text>
        <dbReference type="Rhea" id="RHEA:21644"/>
        <dbReference type="ChEBI" id="CHEBI:15378"/>
        <dbReference type="ChEBI" id="CHEBI:17754"/>
        <dbReference type="ChEBI" id="CHEBI:30616"/>
        <dbReference type="ChEBI" id="CHEBI:57597"/>
        <dbReference type="ChEBI" id="CHEBI:456216"/>
        <dbReference type="EC" id="2.7.1.30"/>
    </reaction>
</comment>
<comment type="activity regulation">
    <text evidence="1">Inhibited by fructose 1,6-bisphosphate (FBP).</text>
</comment>
<comment type="pathway">
    <text evidence="1">Polyol metabolism; glycerol degradation via glycerol kinase pathway; sn-glycerol 3-phosphate from glycerol: step 1/1.</text>
</comment>
<comment type="similarity">
    <text evidence="1">Belongs to the FGGY kinase family.</text>
</comment>
<feature type="chain" id="PRO_1000020704" description="Glycerol kinase">
    <location>
        <begin position="1"/>
        <end position="501"/>
    </location>
</feature>
<feature type="binding site" evidence="1">
    <location>
        <position position="11"/>
    </location>
    <ligand>
        <name>ADP</name>
        <dbReference type="ChEBI" id="CHEBI:456216"/>
    </ligand>
</feature>
<feature type="binding site" evidence="1">
    <location>
        <position position="11"/>
    </location>
    <ligand>
        <name>ATP</name>
        <dbReference type="ChEBI" id="CHEBI:30616"/>
    </ligand>
</feature>
<feature type="binding site" evidence="1">
    <location>
        <position position="11"/>
    </location>
    <ligand>
        <name>sn-glycerol 3-phosphate</name>
        <dbReference type="ChEBI" id="CHEBI:57597"/>
    </ligand>
</feature>
<feature type="binding site" evidence="1">
    <location>
        <position position="12"/>
    </location>
    <ligand>
        <name>ATP</name>
        <dbReference type="ChEBI" id="CHEBI:30616"/>
    </ligand>
</feature>
<feature type="binding site" evidence="1">
    <location>
        <position position="13"/>
    </location>
    <ligand>
        <name>ATP</name>
        <dbReference type="ChEBI" id="CHEBI:30616"/>
    </ligand>
</feature>
<feature type="binding site" evidence="1">
    <location>
        <position position="15"/>
    </location>
    <ligand>
        <name>ADP</name>
        <dbReference type="ChEBI" id="CHEBI:456216"/>
    </ligand>
</feature>
<feature type="binding site" evidence="1">
    <location>
        <position position="81"/>
    </location>
    <ligand>
        <name>glycerol</name>
        <dbReference type="ChEBI" id="CHEBI:17754"/>
    </ligand>
</feature>
<feature type="binding site" evidence="1">
    <location>
        <position position="81"/>
    </location>
    <ligand>
        <name>sn-glycerol 3-phosphate</name>
        <dbReference type="ChEBI" id="CHEBI:57597"/>
    </ligand>
</feature>
<feature type="binding site" evidence="1">
    <location>
        <position position="82"/>
    </location>
    <ligand>
        <name>glycerol</name>
        <dbReference type="ChEBI" id="CHEBI:17754"/>
    </ligand>
</feature>
<feature type="binding site" evidence="1">
    <location>
        <position position="82"/>
    </location>
    <ligand>
        <name>sn-glycerol 3-phosphate</name>
        <dbReference type="ChEBI" id="CHEBI:57597"/>
    </ligand>
</feature>
<feature type="binding site" evidence="1">
    <location>
        <position position="133"/>
    </location>
    <ligand>
        <name>glycerol</name>
        <dbReference type="ChEBI" id="CHEBI:17754"/>
    </ligand>
</feature>
<feature type="binding site" evidence="1">
    <location>
        <position position="133"/>
    </location>
    <ligand>
        <name>sn-glycerol 3-phosphate</name>
        <dbReference type="ChEBI" id="CHEBI:57597"/>
    </ligand>
</feature>
<feature type="binding site" evidence="1">
    <location>
        <position position="242"/>
    </location>
    <ligand>
        <name>glycerol</name>
        <dbReference type="ChEBI" id="CHEBI:17754"/>
    </ligand>
</feature>
<feature type="binding site" evidence="1">
    <location>
        <position position="242"/>
    </location>
    <ligand>
        <name>sn-glycerol 3-phosphate</name>
        <dbReference type="ChEBI" id="CHEBI:57597"/>
    </ligand>
</feature>
<feature type="binding site" evidence="1">
    <location>
        <position position="243"/>
    </location>
    <ligand>
        <name>glycerol</name>
        <dbReference type="ChEBI" id="CHEBI:17754"/>
    </ligand>
</feature>
<feature type="binding site" evidence="1">
    <location>
        <position position="264"/>
    </location>
    <ligand>
        <name>ADP</name>
        <dbReference type="ChEBI" id="CHEBI:456216"/>
    </ligand>
</feature>
<feature type="binding site" evidence="1">
    <location>
        <position position="264"/>
    </location>
    <ligand>
        <name>ATP</name>
        <dbReference type="ChEBI" id="CHEBI:30616"/>
    </ligand>
</feature>
<feature type="binding site" evidence="1">
    <location>
        <position position="307"/>
    </location>
    <ligand>
        <name>ADP</name>
        <dbReference type="ChEBI" id="CHEBI:456216"/>
    </ligand>
</feature>
<feature type="binding site" evidence="1">
    <location>
        <position position="307"/>
    </location>
    <ligand>
        <name>ATP</name>
        <dbReference type="ChEBI" id="CHEBI:30616"/>
    </ligand>
</feature>
<feature type="binding site" evidence="1">
    <location>
        <position position="311"/>
    </location>
    <ligand>
        <name>ATP</name>
        <dbReference type="ChEBI" id="CHEBI:30616"/>
    </ligand>
</feature>
<feature type="binding site" evidence="1">
    <location>
        <position position="409"/>
    </location>
    <ligand>
        <name>ADP</name>
        <dbReference type="ChEBI" id="CHEBI:456216"/>
    </ligand>
</feature>
<feature type="binding site" evidence="1">
    <location>
        <position position="409"/>
    </location>
    <ligand>
        <name>ATP</name>
        <dbReference type="ChEBI" id="CHEBI:30616"/>
    </ligand>
</feature>
<feature type="binding site" evidence="1">
    <location>
        <position position="413"/>
    </location>
    <ligand>
        <name>ADP</name>
        <dbReference type="ChEBI" id="CHEBI:456216"/>
    </ligand>
</feature>
<gene>
    <name evidence="1" type="primary">glpK</name>
    <name type="ordered locus">BAPKO_0250</name>
    <name type="ordered locus">BafPKo_0242</name>
</gene>
<name>GLPK_BORAP</name>